<protein>
    <recommendedName>
        <fullName>Zinc finger and BTB domain-containing protein 8A.1-A</fullName>
    </recommendedName>
</protein>
<organism>
    <name type="scientific">Xenopus laevis</name>
    <name type="common">African clawed frog</name>
    <dbReference type="NCBI Taxonomy" id="8355"/>
    <lineage>
        <taxon>Eukaryota</taxon>
        <taxon>Metazoa</taxon>
        <taxon>Chordata</taxon>
        <taxon>Craniata</taxon>
        <taxon>Vertebrata</taxon>
        <taxon>Euteleostomi</taxon>
        <taxon>Amphibia</taxon>
        <taxon>Batrachia</taxon>
        <taxon>Anura</taxon>
        <taxon>Pipoidea</taxon>
        <taxon>Pipidae</taxon>
        <taxon>Xenopodinae</taxon>
        <taxon>Xenopus</taxon>
        <taxon>Xenopus</taxon>
    </lineage>
</organism>
<comment type="function">
    <text>May be involved in transcriptional regulation.</text>
</comment>
<comment type="subcellular location">
    <subcellularLocation>
        <location evidence="4">Nucleus</location>
    </subcellularLocation>
</comment>
<dbReference type="EMBL" id="BC123247">
    <property type="protein sequence ID" value="AAI23248.1"/>
    <property type="molecule type" value="mRNA"/>
</dbReference>
<dbReference type="RefSeq" id="NP_001090368.1">
    <property type="nucleotide sequence ID" value="NM_001096899.1"/>
</dbReference>
<dbReference type="RefSeq" id="XP_018100870.1">
    <property type="nucleotide sequence ID" value="XM_018245381.1"/>
</dbReference>
<dbReference type="PDB" id="8P2N">
    <property type="method" value="X-ray"/>
    <property type="resolution" value="3.10 A"/>
    <property type="chains" value="A/B=1-147"/>
</dbReference>
<dbReference type="PDB" id="8P2O">
    <property type="method" value="X-ray"/>
    <property type="resolution" value="1.85 A"/>
    <property type="chains" value="A/B=1-147"/>
</dbReference>
<dbReference type="PDB" id="8RIR">
    <property type="method" value="X-ray"/>
    <property type="resolution" value="3.72 A"/>
    <property type="chains" value="A/B=1-147"/>
</dbReference>
<dbReference type="PDB" id="8RIT">
    <property type="method" value="X-ray"/>
    <property type="resolution" value="3.75 A"/>
    <property type="chains" value="A/B/D/E/G/H=1-147"/>
</dbReference>
<dbReference type="PDBsum" id="8P2N"/>
<dbReference type="PDBsum" id="8P2O"/>
<dbReference type="PDBsum" id="8RIR"/>
<dbReference type="PDBsum" id="8RIT"/>
<dbReference type="SASBDB" id="Q0IH98"/>
<dbReference type="SMR" id="Q0IH98"/>
<dbReference type="DNASU" id="779279"/>
<dbReference type="GeneID" id="779279"/>
<dbReference type="KEGG" id="xla:779279"/>
<dbReference type="AGR" id="Xenbase:XB-GENE-866345"/>
<dbReference type="CTD" id="779279"/>
<dbReference type="Xenbase" id="XB-GENE-866345">
    <property type="gene designation" value="zbtb8a.L"/>
</dbReference>
<dbReference type="OMA" id="DMDSTPV"/>
<dbReference type="OrthoDB" id="624345at2759"/>
<dbReference type="Proteomes" id="UP000186698">
    <property type="component" value="Chromosome 2L"/>
</dbReference>
<dbReference type="Bgee" id="779279">
    <property type="expression patterns" value="Expressed in neurula embryo and 19 other cell types or tissues"/>
</dbReference>
<dbReference type="GO" id="GO:0005634">
    <property type="term" value="C:nucleus"/>
    <property type="evidence" value="ECO:0007669"/>
    <property type="project" value="UniProtKB-SubCell"/>
</dbReference>
<dbReference type="GO" id="GO:0000981">
    <property type="term" value="F:DNA-binding transcription factor activity, RNA polymerase II-specific"/>
    <property type="evidence" value="ECO:0000318"/>
    <property type="project" value="GO_Central"/>
</dbReference>
<dbReference type="GO" id="GO:0000978">
    <property type="term" value="F:RNA polymerase II cis-regulatory region sequence-specific DNA binding"/>
    <property type="evidence" value="ECO:0000318"/>
    <property type="project" value="GO_Central"/>
</dbReference>
<dbReference type="GO" id="GO:0008270">
    <property type="term" value="F:zinc ion binding"/>
    <property type="evidence" value="ECO:0007669"/>
    <property type="project" value="UniProtKB-KW"/>
</dbReference>
<dbReference type="GO" id="GO:0006357">
    <property type="term" value="P:regulation of transcription by RNA polymerase II"/>
    <property type="evidence" value="ECO:0000318"/>
    <property type="project" value="GO_Central"/>
</dbReference>
<dbReference type="CDD" id="cd18329">
    <property type="entry name" value="BTB_POZ_ZBTB8A_BOZF1"/>
    <property type="match status" value="1"/>
</dbReference>
<dbReference type="FunFam" id="3.30.160.60:FF:000065">
    <property type="entry name" value="B-cell CLL/lymphoma 6, member B"/>
    <property type="match status" value="1"/>
</dbReference>
<dbReference type="Gene3D" id="3.30.160.60">
    <property type="entry name" value="Classic Zinc Finger"/>
    <property type="match status" value="2"/>
</dbReference>
<dbReference type="Gene3D" id="3.30.710.10">
    <property type="entry name" value="Potassium Channel Kv1.1, Chain A"/>
    <property type="match status" value="1"/>
</dbReference>
<dbReference type="InterPro" id="IPR000210">
    <property type="entry name" value="BTB/POZ_dom"/>
</dbReference>
<dbReference type="InterPro" id="IPR011333">
    <property type="entry name" value="SKP1/BTB/POZ_sf"/>
</dbReference>
<dbReference type="InterPro" id="IPR036236">
    <property type="entry name" value="Znf_C2H2_sf"/>
</dbReference>
<dbReference type="InterPro" id="IPR013087">
    <property type="entry name" value="Znf_C2H2_type"/>
</dbReference>
<dbReference type="InterPro" id="IPR050457">
    <property type="entry name" value="ZnFinger_BTB_dom_contain"/>
</dbReference>
<dbReference type="PANTHER" id="PTHR46105">
    <property type="entry name" value="AGAP004733-PA"/>
    <property type="match status" value="1"/>
</dbReference>
<dbReference type="PANTHER" id="PTHR46105:SF12">
    <property type="entry name" value="ZINC FINGER AND BTB DOMAIN-CONTAINING PROTEIN 8A"/>
    <property type="match status" value="1"/>
</dbReference>
<dbReference type="Pfam" id="PF00651">
    <property type="entry name" value="BTB"/>
    <property type="match status" value="1"/>
</dbReference>
<dbReference type="Pfam" id="PF00096">
    <property type="entry name" value="zf-C2H2"/>
    <property type="match status" value="1"/>
</dbReference>
<dbReference type="SMART" id="SM00225">
    <property type="entry name" value="BTB"/>
    <property type="match status" value="1"/>
</dbReference>
<dbReference type="SMART" id="SM00355">
    <property type="entry name" value="ZnF_C2H2"/>
    <property type="match status" value="2"/>
</dbReference>
<dbReference type="SUPFAM" id="SSF57667">
    <property type="entry name" value="beta-beta-alpha zinc fingers"/>
    <property type="match status" value="1"/>
</dbReference>
<dbReference type="SUPFAM" id="SSF54695">
    <property type="entry name" value="POZ domain"/>
    <property type="match status" value="1"/>
</dbReference>
<dbReference type="PROSITE" id="PS50097">
    <property type="entry name" value="BTB"/>
    <property type="match status" value="1"/>
</dbReference>
<dbReference type="PROSITE" id="PS00028">
    <property type="entry name" value="ZINC_FINGER_C2H2_1"/>
    <property type="match status" value="2"/>
</dbReference>
<dbReference type="PROSITE" id="PS50157">
    <property type="entry name" value="ZINC_FINGER_C2H2_2"/>
    <property type="match status" value="2"/>
</dbReference>
<accession>Q0IH98</accession>
<evidence type="ECO:0000255" key="1">
    <source>
        <dbReference type="PROSITE-ProRule" id="PRU00037"/>
    </source>
</evidence>
<evidence type="ECO:0000255" key="2">
    <source>
        <dbReference type="PROSITE-ProRule" id="PRU00042"/>
    </source>
</evidence>
<evidence type="ECO:0000256" key="3">
    <source>
        <dbReference type="SAM" id="MobiDB-lite"/>
    </source>
</evidence>
<evidence type="ECO:0000305" key="4"/>
<evidence type="ECO:0007829" key="5">
    <source>
        <dbReference type="PDB" id="8P2O"/>
    </source>
</evidence>
<gene>
    <name type="primary">zbtb8a.1-a</name>
    <name type="synonym">zbtb8</name>
    <name type="synonym">zbtb8.1</name>
</gene>
<reference key="1">
    <citation type="submission" date="2006-09" db="EMBL/GenBank/DDBJ databases">
        <authorList>
            <consortium name="NIH - Xenopus Gene Collection (XGC) project"/>
        </authorList>
    </citation>
    <scope>NUCLEOTIDE SEQUENCE [LARGE SCALE MRNA]</scope>
    <source>
        <tissue>Neurula</tissue>
    </source>
</reference>
<feature type="chain" id="PRO_0000378511" description="Zinc finger and BTB domain-containing protein 8A.1-A">
    <location>
        <begin position="1"/>
        <end position="470"/>
    </location>
</feature>
<feature type="domain" description="BTB" evidence="1">
    <location>
        <begin position="24"/>
        <end position="92"/>
    </location>
</feature>
<feature type="zinc finger region" description="C2H2-type 1" evidence="2">
    <location>
        <begin position="316"/>
        <end position="338"/>
    </location>
</feature>
<feature type="zinc finger region" description="C2H2-type 2" evidence="2">
    <location>
        <begin position="344"/>
        <end position="367"/>
    </location>
</feature>
<feature type="region of interest" description="Disordered" evidence="3">
    <location>
        <begin position="260"/>
        <end position="280"/>
    </location>
</feature>
<feature type="region of interest" description="Disordered" evidence="3">
    <location>
        <begin position="439"/>
        <end position="470"/>
    </location>
</feature>
<feature type="compositionally biased region" description="Polar residues" evidence="3">
    <location>
        <begin position="269"/>
        <end position="278"/>
    </location>
</feature>
<feature type="compositionally biased region" description="Basic and acidic residues" evidence="3">
    <location>
        <begin position="439"/>
        <end position="450"/>
    </location>
</feature>
<feature type="helix" evidence="5">
    <location>
        <begin position="5"/>
        <end position="19"/>
    </location>
</feature>
<feature type="strand" evidence="5">
    <location>
        <begin position="26"/>
        <end position="30"/>
    </location>
</feature>
<feature type="strand" evidence="5">
    <location>
        <begin position="33"/>
        <end position="37"/>
    </location>
</feature>
<feature type="helix" evidence="5">
    <location>
        <begin position="39"/>
        <end position="45"/>
    </location>
</feature>
<feature type="helix" evidence="5">
    <location>
        <begin position="47"/>
        <end position="53"/>
    </location>
</feature>
<feature type="turn" evidence="5">
    <location>
        <begin position="55"/>
        <end position="58"/>
    </location>
</feature>
<feature type="strand" evidence="5">
    <location>
        <begin position="64"/>
        <end position="68"/>
    </location>
</feature>
<feature type="helix" evidence="5">
    <location>
        <begin position="73"/>
        <end position="83"/>
    </location>
</feature>
<feature type="turn" evidence="5">
    <location>
        <begin position="92"/>
        <end position="94"/>
    </location>
</feature>
<feature type="helix" evidence="5">
    <location>
        <begin position="95"/>
        <end position="104"/>
    </location>
</feature>
<feature type="helix" evidence="5">
    <location>
        <begin position="108"/>
        <end position="122"/>
    </location>
</feature>
<name>ZB8AA_XENLA</name>
<sequence>MEFSSHHIRLLQQLDEQRQKDLFCDCHIIVEGQMFKAHRNVLFASSGYFKMLLSQSCRDMGEPITATFDVFSADTFTAILDFVYSGKLPLSGQNVIEVMSAASYLQMTDVIGVCKMFIKSSLDINEKDRDGFFSLSDKDAGSNGSGLYAAGWRTESSPTHTHDTAEHGSFIAGYNYPPPITSRLQRPFSKHPRKPELVRKHRRRLLPEPLTPAPLSHIPLGDLVGGSAECMLHDEETVESVSQEEERTQTQESIISIKDEDEDAASHSWPESPQQESLDQGPALHITKAEELYKAMPTMLGGVSGWGEDELSSGRFKCPFCTHTVKRKADLKRHLRCHTGERPYPCEACGKRFTRLEHLRNHFQTIHEAGKLICRRCKLPVTKVTGRVIQDGTRRYRLCHACLAEAGLDNVNFDYGEDQPLVLPPENEREHCWNFKEEGRKENGSERAESDLAIQEVVDSEDDELKEKQD</sequence>
<keyword id="KW-0002">3D-structure</keyword>
<keyword id="KW-0238">DNA-binding</keyword>
<keyword id="KW-0479">Metal-binding</keyword>
<keyword id="KW-0539">Nucleus</keyword>
<keyword id="KW-0597">Phosphoprotein</keyword>
<keyword id="KW-1185">Reference proteome</keyword>
<keyword id="KW-0677">Repeat</keyword>
<keyword id="KW-0804">Transcription</keyword>
<keyword id="KW-0805">Transcription regulation</keyword>
<keyword id="KW-0862">Zinc</keyword>
<keyword id="KW-0863">Zinc-finger</keyword>
<proteinExistence type="evidence at protein level"/>